<keyword id="KW-0150">Chloroplast</keyword>
<keyword id="KW-0472">Membrane</keyword>
<keyword id="KW-0602">Photosynthesis</keyword>
<keyword id="KW-0604">Photosystem II</keyword>
<keyword id="KW-0934">Plastid</keyword>
<keyword id="KW-0674">Reaction center</keyword>
<keyword id="KW-0793">Thylakoid</keyword>
<keyword id="KW-0812">Transmembrane</keyword>
<keyword id="KW-1133">Transmembrane helix</keyword>
<dbReference type="EMBL" id="D38019">
    <property type="protein sequence ID" value="BAA07221.1"/>
    <property type="molecule type" value="Genomic_DNA"/>
</dbReference>
<dbReference type="SMR" id="P69691"/>
<dbReference type="GO" id="GO:0009535">
    <property type="term" value="C:chloroplast thylakoid membrane"/>
    <property type="evidence" value="ECO:0007669"/>
    <property type="project" value="UniProtKB-SubCell"/>
</dbReference>
<dbReference type="GO" id="GO:0009539">
    <property type="term" value="C:photosystem II reaction center"/>
    <property type="evidence" value="ECO:0007669"/>
    <property type="project" value="InterPro"/>
</dbReference>
<dbReference type="GO" id="GO:0015979">
    <property type="term" value="P:photosynthesis"/>
    <property type="evidence" value="ECO:0007669"/>
    <property type="project" value="UniProtKB-UniRule"/>
</dbReference>
<dbReference type="Gene3D" id="6.10.250.2070">
    <property type="match status" value="1"/>
</dbReference>
<dbReference type="HAMAP" id="MF_01305">
    <property type="entry name" value="PSII_PsbJ"/>
    <property type="match status" value="1"/>
</dbReference>
<dbReference type="InterPro" id="IPR002682">
    <property type="entry name" value="PSII_PsbJ"/>
</dbReference>
<dbReference type="InterPro" id="IPR037267">
    <property type="entry name" value="PSII_PsbJ_sf"/>
</dbReference>
<dbReference type="NCBIfam" id="NF002722">
    <property type="entry name" value="PRK02565.1"/>
    <property type="match status" value="1"/>
</dbReference>
<dbReference type="PANTHER" id="PTHR34812">
    <property type="entry name" value="PHOTOSYSTEM II REACTION CENTER PROTEIN J"/>
    <property type="match status" value="1"/>
</dbReference>
<dbReference type="PANTHER" id="PTHR34812:SF3">
    <property type="entry name" value="PHOTOSYSTEM II REACTION CENTER PROTEIN J"/>
    <property type="match status" value="1"/>
</dbReference>
<dbReference type="Pfam" id="PF01788">
    <property type="entry name" value="PsbJ"/>
    <property type="match status" value="1"/>
</dbReference>
<dbReference type="SUPFAM" id="SSF161021">
    <property type="entry name" value="Photosystem II reaction center protein J, PsbJ"/>
    <property type="match status" value="1"/>
</dbReference>
<reference key="1">
    <citation type="journal article" date="1995" name="Curr. Genet.">
        <title>The chloroplast trnP-trnW-petG gene cluster in the mitochondrial genomes of Beta vulgaris, B. trigyna and B. webbiana: evolutionary aspects.</title>
        <authorList>
            <person name="Kubo T."/>
            <person name="Yanai Y."/>
            <person name="Kinoshita T."/>
            <person name="Mikami T."/>
        </authorList>
    </citation>
    <scope>NUCLEOTIDE SEQUENCE [GENOMIC DNA]</scope>
    <source>
        <strain>cv. TK81-O</strain>
        <tissue>Leaf</tissue>
    </source>
</reference>
<sequence>MADTTGRIPLWIIGTVAGILVIGLIGIFFYGSYSGLGSSL</sequence>
<proteinExistence type="inferred from homology"/>
<feature type="chain" id="PRO_0000216581" description="Photosystem II reaction center protein J">
    <location>
        <begin position="1"/>
        <end position="40"/>
    </location>
</feature>
<feature type="transmembrane region" description="Helical" evidence="1">
    <location>
        <begin position="8"/>
        <end position="28"/>
    </location>
</feature>
<gene>
    <name evidence="1" type="primary">psbJ</name>
</gene>
<comment type="function">
    <text evidence="1">One of the components of the core complex of photosystem II (PSII). PSII is a light-driven water:plastoquinone oxidoreductase that uses light energy to abstract electrons from H(2)O, generating O(2) and a proton gradient subsequently used for ATP formation. It consists of a core antenna complex that captures photons, and an electron transfer chain that converts photonic excitation into a charge separation.</text>
</comment>
<comment type="subunit">
    <text evidence="1">PSII is composed of 1 copy each of membrane proteins PsbA, PsbB, PsbC, PsbD, PsbE, PsbF, PsbH, PsbI, PsbJ, PsbK, PsbL, PsbM, PsbT, PsbX, PsbY, PsbZ, Psb30/Ycf12, at least 3 peripheral proteins of the oxygen-evolving complex and a large number of cofactors. It forms dimeric complexes.</text>
</comment>
<comment type="subcellular location">
    <subcellularLocation>
        <location evidence="1">Plastid</location>
        <location evidence="1">Chloroplast thylakoid membrane</location>
        <topology evidence="1">Single-pass membrane protein</topology>
    </subcellularLocation>
</comment>
<comment type="similarity">
    <text evidence="1">Belongs to the PsbJ family.</text>
</comment>
<organism>
    <name type="scientific">Beta vulgaris</name>
    <name type="common">Sugar beet</name>
    <dbReference type="NCBI Taxonomy" id="161934"/>
    <lineage>
        <taxon>Eukaryota</taxon>
        <taxon>Viridiplantae</taxon>
        <taxon>Streptophyta</taxon>
        <taxon>Embryophyta</taxon>
        <taxon>Tracheophyta</taxon>
        <taxon>Spermatophyta</taxon>
        <taxon>Magnoliopsida</taxon>
        <taxon>eudicotyledons</taxon>
        <taxon>Gunneridae</taxon>
        <taxon>Pentapetalae</taxon>
        <taxon>Caryophyllales</taxon>
        <taxon>Chenopodiaceae</taxon>
        <taxon>Betoideae</taxon>
        <taxon>Beta</taxon>
    </lineage>
</organism>
<name>PSBJ_BETVU</name>
<accession>P69691</accession>
<accession>P12190</accession>
<protein>
    <recommendedName>
        <fullName evidence="1">Photosystem II reaction center protein J</fullName>
        <shortName evidence="1">PSII-J</shortName>
    </recommendedName>
</protein>
<evidence type="ECO:0000255" key="1">
    <source>
        <dbReference type="HAMAP-Rule" id="MF_01305"/>
    </source>
</evidence>
<geneLocation type="chloroplast"/>